<accession>Q0WTI8</accession>
<accession>O80684</accession>
<accession>Q84MC8</accession>
<organism>
    <name type="scientific">Arabidopsis thaliana</name>
    <name type="common">Mouse-ear cress</name>
    <dbReference type="NCBI Taxonomy" id="3702"/>
    <lineage>
        <taxon>Eukaryota</taxon>
        <taxon>Viridiplantae</taxon>
        <taxon>Streptophyta</taxon>
        <taxon>Embryophyta</taxon>
        <taxon>Tracheophyta</taxon>
        <taxon>Spermatophyta</taxon>
        <taxon>Magnoliopsida</taxon>
        <taxon>eudicotyledons</taxon>
        <taxon>Gunneridae</taxon>
        <taxon>Pentapetalae</taxon>
        <taxon>rosids</taxon>
        <taxon>malvids</taxon>
        <taxon>Brassicales</taxon>
        <taxon>Brassicaceae</taxon>
        <taxon>Camelineae</taxon>
        <taxon>Arabidopsis</taxon>
    </lineage>
</organism>
<comment type="function">
    <text evidence="1">Plays a continuous role in plant development probably in the structural organization of compartments.</text>
</comment>
<comment type="subcellular location">
    <subcellularLocation>
        <location evidence="4">Membrane</location>
        <topology evidence="4">Single-pass membrane protein</topology>
    </subcellularLocation>
</comment>
<comment type="alternative products">
    <event type="alternative splicing"/>
    <isoform>
        <id>Q0WTI8-1</id>
        <name>1</name>
        <sequence type="displayed"/>
    </isoform>
    <text>A number of isoforms are produced. According to EST sequences.</text>
</comment>
<comment type="similarity">
    <text evidence="4">Belongs to the DnaJ family. C/III subfamily.</text>
</comment>
<comment type="caution">
    <text evidence="4">Was originally erroneously termed LCR51 before the split of the gene model.</text>
</comment>
<comment type="sequence caution" evidence="4">
    <conflict type="erroneous gene model prediction">
        <sequence resource="EMBL-CDS" id="AAD12011"/>
    </conflict>
    <text>The predicted gene has been split into 2 genes: At2g40997 and At2g41000.</text>
</comment>
<gene>
    <name type="primary">ATJ72</name>
    <name type="synonym">C72</name>
    <name type="synonym">LCR51</name>
    <name type="ordered locus">At2g41000</name>
    <name type="ORF">T3K9.23</name>
</gene>
<evidence type="ECO:0000250" key="1"/>
<evidence type="ECO:0000255" key="2"/>
<evidence type="ECO:0000255" key="3">
    <source>
        <dbReference type="PROSITE-ProRule" id="PRU00286"/>
    </source>
</evidence>
<evidence type="ECO:0000305" key="4"/>
<sequence length="184" mass="20646">MVDHYQVLGVTRNATKKEVKDAFRRLAIKYHPDKHAQSPEHVRHNATVRFKLVSEAYEVLNDDLKRASYNAGSDSDCFRRTSGSYSNPYGNRGGRAQGSGYGYGYGYSTRNRQASSFSSGFDSTFRYLTTRAFLLNLALAGGLYFAFTAIDTSGETLWKMRNSGKSFEEAMESIEKSKSHKDEG</sequence>
<keyword id="KW-0025">Alternative splicing</keyword>
<keyword id="KW-0143">Chaperone</keyword>
<keyword id="KW-0472">Membrane</keyword>
<keyword id="KW-1185">Reference proteome</keyword>
<keyword id="KW-0812">Transmembrane</keyword>
<keyword id="KW-1133">Transmembrane helix</keyword>
<feature type="chain" id="PRO_0000071087" description="Chaperone protein dnaJ 72">
    <location>
        <begin position="1"/>
        <end position="184"/>
    </location>
</feature>
<feature type="transmembrane region" description="Helical" evidence="2">
    <location>
        <begin position="133"/>
        <end position="150"/>
    </location>
</feature>
<feature type="domain" description="J" evidence="3">
    <location>
        <begin position="3"/>
        <end position="73"/>
    </location>
</feature>
<dbReference type="EMBL" id="AC004261">
    <property type="protein sequence ID" value="AAD12011.1"/>
    <property type="status" value="ALT_SEQ"/>
    <property type="molecule type" value="Genomic_DNA"/>
</dbReference>
<dbReference type="EMBL" id="CP002685">
    <property type="protein sequence ID" value="AEC09913.1"/>
    <property type="molecule type" value="Genomic_DNA"/>
</dbReference>
<dbReference type="EMBL" id="BT006395">
    <property type="protein sequence ID" value="AAP21203.1"/>
    <property type="molecule type" value="mRNA"/>
</dbReference>
<dbReference type="EMBL" id="AK227566">
    <property type="protein sequence ID" value="BAE99560.1"/>
    <property type="molecule type" value="mRNA"/>
</dbReference>
<dbReference type="PIR" id="T02119">
    <property type="entry name" value="T02119"/>
</dbReference>
<dbReference type="RefSeq" id="NP_181633.3">
    <molecule id="Q0WTI8-1"/>
    <property type="nucleotide sequence ID" value="NM_129665.5"/>
</dbReference>
<dbReference type="SMR" id="Q0WTI8"/>
<dbReference type="FunCoup" id="Q0WTI8">
    <property type="interactions" value="49"/>
</dbReference>
<dbReference type="STRING" id="3702.Q0WTI8"/>
<dbReference type="PaxDb" id="3702-AT2G41000.2"/>
<dbReference type="ProteomicsDB" id="222609">
    <molecule id="Q0WTI8-1"/>
</dbReference>
<dbReference type="EnsemblPlants" id="AT2G41000.1">
    <molecule id="Q0WTI8-1"/>
    <property type="protein sequence ID" value="AT2G41000.1"/>
    <property type="gene ID" value="AT2G41000"/>
</dbReference>
<dbReference type="GeneID" id="818700"/>
<dbReference type="Gramene" id="AT2G41000.1">
    <molecule id="Q0WTI8-1"/>
    <property type="protein sequence ID" value="AT2G41000.1"/>
    <property type="gene ID" value="AT2G41000"/>
</dbReference>
<dbReference type="KEGG" id="ath:AT2G41000"/>
<dbReference type="Araport" id="AT2G41000"/>
<dbReference type="TAIR" id="AT2G41000"/>
<dbReference type="eggNOG" id="KOG0714">
    <property type="taxonomic scope" value="Eukaryota"/>
</dbReference>
<dbReference type="HOGENOM" id="CLU_085531_0_0_1"/>
<dbReference type="InParanoid" id="Q0WTI8"/>
<dbReference type="OMA" id="MVLRFMT"/>
<dbReference type="OrthoDB" id="442087at2759"/>
<dbReference type="PhylomeDB" id="Q0WTI8"/>
<dbReference type="PRO" id="PR:Q0WTI8"/>
<dbReference type="Proteomes" id="UP000006548">
    <property type="component" value="Chromosome 2"/>
</dbReference>
<dbReference type="ExpressionAtlas" id="Q0WTI8">
    <property type="expression patterns" value="baseline and differential"/>
</dbReference>
<dbReference type="GO" id="GO:0016020">
    <property type="term" value="C:membrane"/>
    <property type="evidence" value="ECO:0007669"/>
    <property type="project" value="UniProtKB-SubCell"/>
</dbReference>
<dbReference type="CDD" id="cd06257">
    <property type="entry name" value="DnaJ"/>
    <property type="match status" value="1"/>
</dbReference>
<dbReference type="FunFam" id="1.10.287.110:FF:000073">
    <property type="entry name" value="DnaJ domain protein"/>
    <property type="match status" value="1"/>
</dbReference>
<dbReference type="Gene3D" id="1.10.287.110">
    <property type="entry name" value="DnaJ domain"/>
    <property type="match status" value="1"/>
</dbReference>
<dbReference type="InterPro" id="IPR050817">
    <property type="entry name" value="DjlA_DnaK_co-chaperone"/>
</dbReference>
<dbReference type="InterPro" id="IPR001623">
    <property type="entry name" value="DnaJ_domain"/>
</dbReference>
<dbReference type="InterPro" id="IPR018253">
    <property type="entry name" value="DnaJ_domain_CS"/>
</dbReference>
<dbReference type="InterPro" id="IPR036869">
    <property type="entry name" value="J_dom_sf"/>
</dbReference>
<dbReference type="PANTHER" id="PTHR24074">
    <property type="entry name" value="CO-CHAPERONE PROTEIN DJLA"/>
    <property type="match status" value="1"/>
</dbReference>
<dbReference type="Pfam" id="PF00226">
    <property type="entry name" value="DnaJ"/>
    <property type="match status" value="1"/>
</dbReference>
<dbReference type="PRINTS" id="PR00625">
    <property type="entry name" value="JDOMAIN"/>
</dbReference>
<dbReference type="SMART" id="SM00271">
    <property type="entry name" value="DnaJ"/>
    <property type="match status" value="1"/>
</dbReference>
<dbReference type="SUPFAM" id="SSF46565">
    <property type="entry name" value="Chaperone J-domain"/>
    <property type="match status" value="1"/>
</dbReference>
<dbReference type="PROSITE" id="PS00636">
    <property type="entry name" value="DNAJ_1"/>
    <property type="match status" value="1"/>
</dbReference>
<dbReference type="PROSITE" id="PS50076">
    <property type="entry name" value="DNAJ_2"/>
    <property type="match status" value="1"/>
</dbReference>
<reference key="1">
    <citation type="journal article" date="1999" name="Nature">
        <title>Sequence and analysis of chromosome 2 of the plant Arabidopsis thaliana.</title>
        <authorList>
            <person name="Lin X."/>
            <person name="Kaul S."/>
            <person name="Rounsley S.D."/>
            <person name="Shea T.P."/>
            <person name="Benito M.-I."/>
            <person name="Town C.D."/>
            <person name="Fujii C.Y."/>
            <person name="Mason T.M."/>
            <person name="Bowman C.L."/>
            <person name="Barnstead M.E."/>
            <person name="Feldblyum T.V."/>
            <person name="Buell C.R."/>
            <person name="Ketchum K.A."/>
            <person name="Lee J.J."/>
            <person name="Ronning C.M."/>
            <person name="Koo H.L."/>
            <person name="Moffat K.S."/>
            <person name="Cronin L.A."/>
            <person name="Shen M."/>
            <person name="Pai G."/>
            <person name="Van Aken S."/>
            <person name="Umayam L."/>
            <person name="Tallon L.J."/>
            <person name="Gill J.E."/>
            <person name="Adams M.D."/>
            <person name="Carrera A.J."/>
            <person name="Creasy T.H."/>
            <person name="Goodman H.M."/>
            <person name="Somerville C.R."/>
            <person name="Copenhaver G.P."/>
            <person name="Preuss D."/>
            <person name="Nierman W.C."/>
            <person name="White O."/>
            <person name="Eisen J.A."/>
            <person name="Salzberg S.L."/>
            <person name="Fraser C.M."/>
            <person name="Venter J.C."/>
        </authorList>
    </citation>
    <scope>NUCLEOTIDE SEQUENCE [LARGE SCALE GENOMIC DNA]</scope>
    <source>
        <strain>cv. Columbia</strain>
    </source>
</reference>
<reference key="2">
    <citation type="journal article" date="2017" name="Plant J.">
        <title>Araport11: a complete reannotation of the Arabidopsis thaliana reference genome.</title>
        <authorList>
            <person name="Cheng C.Y."/>
            <person name="Krishnakumar V."/>
            <person name="Chan A.P."/>
            <person name="Thibaud-Nissen F."/>
            <person name="Schobel S."/>
            <person name="Town C.D."/>
        </authorList>
    </citation>
    <scope>GENOME REANNOTATION</scope>
    <source>
        <strain>cv. Columbia</strain>
    </source>
</reference>
<reference key="3">
    <citation type="journal article" date="2003" name="Science">
        <title>Empirical analysis of transcriptional activity in the Arabidopsis genome.</title>
        <authorList>
            <person name="Yamada K."/>
            <person name="Lim J."/>
            <person name="Dale J.M."/>
            <person name="Chen H."/>
            <person name="Shinn P."/>
            <person name="Palm C.J."/>
            <person name="Southwick A.M."/>
            <person name="Wu H.C."/>
            <person name="Kim C.J."/>
            <person name="Nguyen M."/>
            <person name="Pham P.K."/>
            <person name="Cheuk R.F."/>
            <person name="Karlin-Newmann G."/>
            <person name="Liu S.X."/>
            <person name="Lam B."/>
            <person name="Sakano H."/>
            <person name="Wu T."/>
            <person name="Yu G."/>
            <person name="Miranda M."/>
            <person name="Quach H.L."/>
            <person name="Tripp M."/>
            <person name="Chang C.H."/>
            <person name="Lee J.M."/>
            <person name="Toriumi M.J."/>
            <person name="Chan M.M."/>
            <person name="Tang C.C."/>
            <person name="Onodera C.S."/>
            <person name="Deng J.M."/>
            <person name="Akiyama K."/>
            <person name="Ansari Y."/>
            <person name="Arakawa T."/>
            <person name="Banh J."/>
            <person name="Banno F."/>
            <person name="Bowser L."/>
            <person name="Brooks S.Y."/>
            <person name="Carninci P."/>
            <person name="Chao Q."/>
            <person name="Choy N."/>
            <person name="Enju A."/>
            <person name="Goldsmith A.D."/>
            <person name="Gurjal M."/>
            <person name="Hansen N.F."/>
            <person name="Hayashizaki Y."/>
            <person name="Johnson-Hopson C."/>
            <person name="Hsuan V.W."/>
            <person name="Iida K."/>
            <person name="Karnes M."/>
            <person name="Khan S."/>
            <person name="Koesema E."/>
            <person name="Ishida J."/>
            <person name="Jiang P.X."/>
            <person name="Jones T."/>
            <person name="Kawai J."/>
            <person name="Kamiya A."/>
            <person name="Meyers C."/>
            <person name="Nakajima M."/>
            <person name="Narusaka M."/>
            <person name="Seki M."/>
            <person name="Sakurai T."/>
            <person name="Satou M."/>
            <person name="Tamse R."/>
            <person name="Vaysberg M."/>
            <person name="Wallender E.K."/>
            <person name="Wong C."/>
            <person name="Yamamura Y."/>
            <person name="Yuan S."/>
            <person name="Shinozaki K."/>
            <person name="Davis R.W."/>
            <person name="Theologis A."/>
            <person name="Ecker J.R."/>
        </authorList>
    </citation>
    <scope>NUCLEOTIDE SEQUENCE [LARGE SCALE MRNA]</scope>
    <source>
        <strain>cv. Columbia</strain>
    </source>
</reference>
<reference key="4">
    <citation type="submission" date="2006-07" db="EMBL/GenBank/DDBJ databases">
        <title>Large-scale analysis of RIKEN Arabidopsis full-length (RAFL) cDNAs.</title>
        <authorList>
            <person name="Totoki Y."/>
            <person name="Seki M."/>
            <person name="Ishida J."/>
            <person name="Nakajima M."/>
            <person name="Enju A."/>
            <person name="Kamiya A."/>
            <person name="Narusaka M."/>
            <person name="Shin-i T."/>
            <person name="Nakagawa M."/>
            <person name="Sakamoto N."/>
            <person name="Oishi K."/>
            <person name="Kohara Y."/>
            <person name="Kobayashi M."/>
            <person name="Toyoda A."/>
            <person name="Sakaki Y."/>
            <person name="Sakurai T."/>
            <person name="Iida K."/>
            <person name="Akiyama K."/>
            <person name="Satou M."/>
            <person name="Toyoda T."/>
            <person name="Konagaya A."/>
            <person name="Carninci P."/>
            <person name="Kawai J."/>
            <person name="Hayashizaki Y."/>
            <person name="Shinozaki K."/>
        </authorList>
    </citation>
    <scope>NUCLEOTIDE SEQUENCE [LARGE SCALE MRNA]</scope>
    <source>
        <strain>cv. Columbia</strain>
    </source>
</reference>
<reference key="5">
    <citation type="journal article" date="2001" name="Cell Stress Chaperones">
        <title>The J-domain proteins of Arabidopsis thaliana: an unexpectedly large and diverse family of chaperones.</title>
        <authorList>
            <person name="Miernyk J.A."/>
        </authorList>
    </citation>
    <scope>GENE FAMILY</scope>
    <scope>NOMENCLATURE</scope>
</reference>
<proteinExistence type="evidence at transcript level"/>
<name>DNJ72_ARATH</name>
<protein>
    <recommendedName>
        <fullName>Chaperone protein dnaJ 72</fullName>
        <shortName>AtDjC72</shortName>
        <shortName>AtJ72</shortName>
    </recommendedName>
</protein>